<dbReference type="EMBL" id="BX640443">
    <property type="protein sequence ID" value="CAE32504.1"/>
    <property type="molecule type" value="Genomic_DNA"/>
</dbReference>
<dbReference type="RefSeq" id="WP_003812895.1">
    <property type="nucleotide sequence ID" value="NC_002927.3"/>
</dbReference>
<dbReference type="PDB" id="2JS4">
    <property type="method" value="NMR"/>
    <property type="chains" value="A=1-62"/>
</dbReference>
<dbReference type="PDBsum" id="2JS4"/>
<dbReference type="BMRB" id="Q7WKU6"/>
<dbReference type="SMR" id="Q7WKU6"/>
<dbReference type="DNASU" id="2660704"/>
<dbReference type="KEGG" id="bbr:BB2007"/>
<dbReference type="eggNOG" id="COG2835">
    <property type="taxonomic scope" value="Bacteria"/>
</dbReference>
<dbReference type="HOGENOM" id="CLU_155659_3_0_4"/>
<dbReference type="EvolutionaryTrace" id="Q7WKU6"/>
<dbReference type="Proteomes" id="UP000001027">
    <property type="component" value="Chromosome"/>
</dbReference>
<dbReference type="GO" id="GO:0005829">
    <property type="term" value="C:cytosol"/>
    <property type="evidence" value="ECO:0007669"/>
    <property type="project" value="TreeGrafter"/>
</dbReference>
<dbReference type="FunFam" id="2.20.25.10:FF:000002">
    <property type="entry name" value="UPF0434 protein YcaR"/>
    <property type="match status" value="1"/>
</dbReference>
<dbReference type="Gene3D" id="2.20.25.10">
    <property type="match status" value="1"/>
</dbReference>
<dbReference type="HAMAP" id="MF_01187">
    <property type="entry name" value="UPF0434"/>
    <property type="match status" value="1"/>
</dbReference>
<dbReference type="InterPro" id="IPR005651">
    <property type="entry name" value="Trm112-like"/>
</dbReference>
<dbReference type="PANTHER" id="PTHR33505:SF4">
    <property type="entry name" value="PROTEIN PREY, MITOCHONDRIAL"/>
    <property type="match status" value="1"/>
</dbReference>
<dbReference type="PANTHER" id="PTHR33505">
    <property type="entry name" value="ZGC:162634"/>
    <property type="match status" value="1"/>
</dbReference>
<dbReference type="Pfam" id="PF03966">
    <property type="entry name" value="Trm112p"/>
    <property type="match status" value="1"/>
</dbReference>
<dbReference type="SUPFAM" id="SSF158997">
    <property type="entry name" value="Trm112p-like"/>
    <property type="match status" value="1"/>
</dbReference>
<sequence length="62" mass="6811">MESRLLDILVCPVCKGRLEFQRAQAELVCNADRLAFPVRDGVPIMLEAEARSLDAEAPAQPS</sequence>
<organism>
    <name type="scientific">Bordetella bronchiseptica (strain ATCC BAA-588 / NCTC 13252 / RB50)</name>
    <name type="common">Alcaligenes bronchisepticus</name>
    <dbReference type="NCBI Taxonomy" id="257310"/>
    <lineage>
        <taxon>Bacteria</taxon>
        <taxon>Pseudomonadati</taxon>
        <taxon>Pseudomonadota</taxon>
        <taxon>Betaproteobacteria</taxon>
        <taxon>Burkholderiales</taxon>
        <taxon>Alcaligenaceae</taxon>
        <taxon>Bordetella</taxon>
    </lineage>
</organism>
<evidence type="ECO:0000255" key="1">
    <source>
        <dbReference type="HAMAP-Rule" id="MF_01187"/>
    </source>
</evidence>
<evidence type="ECO:0007829" key="2">
    <source>
        <dbReference type="PDB" id="2JS4"/>
    </source>
</evidence>
<reference key="1">
    <citation type="journal article" date="2003" name="Nat. Genet.">
        <title>Comparative analysis of the genome sequences of Bordetella pertussis, Bordetella parapertussis and Bordetella bronchiseptica.</title>
        <authorList>
            <person name="Parkhill J."/>
            <person name="Sebaihia M."/>
            <person name="Preston A."/>
            <person name="Murphy L.D."/>
            <person name="Thomson N.R."/>
            <person name="Harris D.E."/>
            <person name="Holden M.T.G."/>
            <person name="Churcher C.M."/>
            <person name="Bentley S.D."/>
            <person name="Mungall K.L."/>
            <person name="Cerdeno-Tarraga A.-M."/>
            <person name="Temple L."/>
            <person name="James K.D."/>
            <person name="Harris B."/>
            <person name="Quail M.A."/>
            <person name="Achtman M."/>
            <person name="Atkin R."/>
            <person name="Baker S."/>
            <person name="Basham D."/>
            <person name="Bason N."/>
            <person name="Cherevach I."/>
            <person name="Chillingworth T."/>
            <person name="Collins M."/>
            <person name="Cronin A."/>
            <person name="Davis P."/>
            <person name="Doggett J."/>
            <person name="Feltwell T."/>
            <person name="Goble A."/>
            <person name="Hamlin N."/>
            <person name="Hauser H."/>
            <person name="Holroyd S."/>
            <person name="Jagels K."/>
            <person name="Leather S."/>
            <person name="Moule S."/>
            <person name="Norberczak H."/>
            <person name="O'Neil S."/>
            <person name="Ormond D."/>
            <person name="Price C."/>
            <person name="Rabbinowitsch E."/>
            <person name="Rutter S."/>
            <person name="Sanders M."/>
            <person name="Saunders D."/>
            <person name="Seeger K."/>
            <person name="Sharp S."/>
            <person name="Simmonds M."/>
            <person name="Skelton J."/>
            <person name="Squares R."/>
            <person name="Squares S."/>
            <person name="Stevens K."/>
            <person name="Unwin L."/>
            <person name="Whitehead S."/>
            <person name="Barrell B.G."/>
            <person name="Maskell D.J."/>
        </authorList>
    </citation>
    <scope>NUCLEOTIDE SEQUENCE [LARGE SCALE GENOMIC DNA]</scope>
    <source>
        <strain>ATCC BAA-588 / NCTC 13252 / RB50</strain>
    </source>
</reference>
<accession>Q7WKU6</accession>
<proteinExistence type="evidence at protein level"/>
<gene>
    <name type="ordered locus">BB2007</name>
</gene>
<name>Y2007_BORBR</name>
<comment type="similarity">
    <text evidence="1">Belongs to the UPF0434 family.</text>
</comment>
<keyword id="KW-0002">3D-structure</keyword>
<protein>
    <recommendedName>
        <fullName evidence="1">UPF0434 protein BB2007</fullName>
    </recommendedName>
</protein>
<feature type="chain" id="PRO_0000291063" description="UPF0434 protein BB2007">
    <location>
        <begin position="1"/>
        <end position="62"/>
    </location>
</feature>
<feature type="turn" evidence="2">
    <location>
        <begin position="12"/>
        <end position="14"/>
    </location>
</feature>
<feature type="strand" evidence="2">
    <location>
        <begin position="17"/>
        <end position="21"/>
    </location>
</feature>
<feature type="turn" evidence="2">
    <location>
        <begin position="22"/>
        <end position="25"/>
    </location>
</feature>
<feature type="strand" evidence="2">
    <location>
        <begin position="26"/>
        <end position="29"/>
    </location>
</feature>
<feature type="turn" evidence="2">
    <location>
        <begin position="30"/>
        <end position="32"/>
    </location>
</feature>
<feature type="strand" evidence="2">
    <location>
        <begin position="34"/>
        <end position="39"/>
    </location>
</feature>
<feature type="helix" evidence="2">
    <location>
        <begin position="47"/>
        <end position="49"/>
    </location>
</feature>
<feature type="strand" evidence="2">
    <location>
        <begin position="50"/>
        <end position="55"/>
    </location>
</feature>